<evidence type="ECO:0000250" key="1">
    <source>
        <dbReference type="UniProtKB" id="Q8BTC1"/>
    </source>
</evidence>
<evidence type="ECO:0000255" key="2"/>
<evidence type="ECO:0000269" key="3">
    <source>
    </source>
</evidence>
<evidence type="ECO:0000269" key="4">
    <source>
    </source>
</evidence>
<evidence type="ECO:0000269" key="5">
    <source>
    </source>
</evidence>
<evidence type="ECO:0000303" key="6">
    <source>
    </source>
</evidence>
<evidence type="ECO:0000305" key="7"/>
<evidence type="ECO:0000305" key="8">
    <source>
    </source>
</evidence>
<evidence type="ECO:0000305" key="9">
    <source>
    </source>
</evidence>
<evidence type="ECO:0000312" key="10">
    <source>
        <dbReference type="HGNC" id="HGNC:34450"/>
    </source>
</evidence>
<comment type="function">
    <text evidence="1 4 5">Required for the assembly and stability of the mitochondrial ubiquinol-cytochrome c reductase complex (complex III (CIII) or cytochrome b-c1 complex), a multisubunit transmembrane complex that is part of the mitochondrial electron transport chain (ETC) which drives oxidative phosphorylation (PubMed:32161263). Mediates early complex III biogenesis (By similarity). Participates in regulating the levels of electron transport chain proteins, and therefore energy supply, in response to changes in energy demand (By similarity). Also required for cytochrome c oxidase complex (complex IV) assembly (PubMed:34969438).</text>
</comment>
<comment type="subunit">
    <text evidence="1">Interacts with UQCRC1 (PubMed:32161263). Interacts with UQCRQ (By similarity). Interacts with UQCC5 (PubMed:34969438). Forms a complex, named COMB/coordinator of mitochondrial CYTB biogenesis, composed of UQCC1, UQCC2, UQCC4, UQCC5 and UQCC6; stabilizes nascent cytochrome b/MT-CYB and promotes its membrane insertion. Forms a complex, named COMA, composed of UQCC1, UQCC2 and UQCC4; activates MT-CYB translation. Forms a complex, named COMC, composed of UQCC1, UQCC2; UQCC3 and UQCC4; mediates MT-CYB hemylation and association with the first nuclear-encoded complex III subunit UQCRQ (By similarity). Interacts with MT-CYB (By similarity).</text>
</comment>
<comment type="subcellular location">
    <subcellularLocation>
        <location evidence="4 5">Mitochondrion inner membrane</location>
        <topology evidence="8">Single-pass type II membrane protein</topology>
    </subcellularLocation>
</comment>
<comment type="tissue specificity">
    <text evidence="4">Cardiac and skeletal muscle (at protein level).</text>
</comment>
<comment type="induction">
    <text evidence="4">Up-regulated in response to glucose, serum, fatty acid starvation and AMPK activation using 5-aminoimidizole-4-carboxamide-1-beta- D-riboside.</text>
</comment>
<comment type="similarity">
    <text evidence="7">Belongs to the UQCC6 family.</text>
</comment>
<name>UQCC6_HUMAN</name>
<keyword id="KW-0472">Membrane</keyword>
<keyword id="KW-0496">Mitochondrion</keyword>
<keyword id="KW-0999">Mitochondrion inner membrane</keyword>
<keyword id="KW-1267">Proteomics identification</keyword>
<keyword id="KW-1185">Reference proteome</keyword>
<keyword id="KW-0735">Signal-anchor</keyword>
<keyword id="KW-0812">Transmembrane</keyword>
<keyword id="KW-1133">Transmembrane helix</keyword>
<proteinExistence type="evidence at protein level"/>
<organism>
    <name type="scientific">Homo sapiens</name>
    <name type="common">Human</name>
    <dbReference type="NCBI Taxonomy" id="9606"/>
    <lineage>
        <taxon>Eukaryota</taxon>
        <taxon>Metazoa</taxon>
        <taxon>Chordata</taxon>
        <taxon>Craniata</taxon>
        <taxon>Vertebrata</taxon>
        <taxon>Euteleostomi</taxon>
        <taxon>Mammalia</taxon>
        <taxon>Eutheria</taxon>
        <taxon>Euarchontoglires</taxon>
        <taxon>Primates</taxon>
        <taxon>Haplorrhini</taxon>
        <taxon>Catarrhini</taxon>
        <taxon>Hominidae</taxon>
        <taxon>Homo</taxon>
    </lineage>
</organism>
<gene>
    <name evidence="10" type="primary">UQCC6</name>
    <name evidence="6" type="synonym">BR</name>
    <name evidence="6" type="synonym">BRAWNIN</name>
    <name evidence="10" type="synonym">C12orf73</name>
</gene>
<sequence>MPAGVPMSTYLKMFAASLLAMCAGAEVVHRYYRPDLTIPEIPPKRGELKTELLGLKERKHKPQVSQQEELK</sequence>
<accession>Q69YU5</accession>
<protein>
    <recommendedName>
        <fullName>Ubiquinol-cytochrome c reductase complex assembly factor 6</fullName>
    </recommendedName>
    <alternativeName>
        <fullName evidence="6">Protein BRAWNIN</fullName>
    </alternativeName>
</protein>
<dbReference type="EMBL" id="AK024037">
    <property type="status" value="NOT_ANNOTATED_CDS"/>
    <property type="molecule type" value="mRNA"/>
</dbReference>
<dbReference type="EMBL" id="AL359596">
    <property type="protein sequence ID" value="CAH10667.1"/>
    <property type="molecule type" value="mRNA"/>
</dbReference>
<dbReference type="EMBL" id="CH471054">
    <property type="protein sequence ID" value="EAW97726.1"/>
    <property type="molecule type" value="Genomic_DNA"/>
</dbReference>
<dbReference type="EMBL" id="BC039467">
    <property type="status" value="NOT_ANNOTATED_CDS"/>
    <property type="molecule type" value="mRNA"/>
</dbReference>
<dbReference type="CCDS" id="CCDS44964.1"/>
<dbReference type="RefSeq" id="NP_001129042.1">
    <property type="nucleotide sequence ID" value="NM_001135570.3"/>
</dbReference>
<dbReference type="RefSeq" id="XP_016875405.1">
    <property type="nucleotide sequence ID" value="XM_017019916.3"/>
</dbReference>
<dbReference type="RefSeq" id="XP_016875406.1">
    <property type="nucleotide sequence ID" value="XM_017019917.3"/>
</dbReference>
<dbReference type="RefSeq" id="XP_054229104.1">
    <property type="nucleotide sequence ID" value="XM_054373129.1"/>
</dbReference>
<dbReference type="RefSeq" id="XP_054229105.1">
    <property type="nucleotide sequence ID" value="XM_054373130.1"/>
</dbReference>
<dbReference type="SMR" id="Q69YU5"/>
<dbReference type="BioGRID" id="608990">
    <property type="interactions" value="9"/>
</dbReference>
<dbReference type="FunCoup" id="Q69YU5">
    <property type="interactions" value="580"/>
</dbReference>
<dbReference type="IntAct" id="Q69YU5">
    <property type="interactions" value="5"/>
</dbReference>
<dbReference type="MINT" id="Q69YU5"/>
<dbReference type="STRING" id="9606.ENSP00000367330"/>
<dbReference type="iPTMnet" id="Q69YU5"/>
<dbReference type="PhosphoSitePlus" id="Q69YU5"/>
<dbReference type="SwissPalm" id="Q69YU5"/>
<dbReference type="BioMuta" id="C12orf73"/>
<dbReference type="jPOST" id="Q69YU5"/>
<dbReference type="MassIVE" id="Q69YU5"/>
<dbReference type="PaxDb" id="9606-ENSP00000367330"/>
<dbReference type="PeptideAtlas" id="Q69YU5"/>
<dbReference type="ProteomicsDB" id="66170"/>
<dbReference type="Pumba" id="Q69YU5"/>
<dbReference type="TopDownProteomics" id="Q69YU5"/>
<dbReference type="Antibodypedia" id="48147">
    <property type="antibodies" value="8 antibodies from 7 providers"/>
</dbReference>
<dbReference type="DNASU" id="728568"/>
<dbReference type="Ensembl" id="ENST00000378090.9">
    <property type="protein sequence ID" value="ENSP00000367330.4"/>
    <property type="gene ID" value="ENSG00000204954.10"/>
</dbReference>
<dbReference type="Ensembl" id="ENST00000547945.5">
    <property type="protein sequence ID" value="ENSP00000449839.1"/>
    <property type="gene ID" value="ENSG00000204954.10"/>
</dbReference>
<dbReference type="Ensembl" id="ENST00000549478.1">
    <property type="protein sequence ID" value="ENSP00000448771.1"/>
    <property type="gene ID" value="ENSG00000204954.10"/>
</dbReference>
<dbReference type="Ensembl" id="ENST00000553183.5">
    <property type="protein sequence ID" value="ENSP00000446981.1"/>
    <property type="gene ID" value="ENSG00000204954.10"/>
</dbReference>
<dbReference type="GeneID" id="728568"/>
<dbReference type="KEGG" id="hsa:728568"/>
<dbReference type="MANE-Select" id="ENST00000378090.9">
    <property type="protein sequence ID" value="ENSP00000367330.4"/>
    <property type="RefSeq nucleotide sequence ID" value="NM_001135570.3"/>
    <property type="RefSeq protein sequence ID" value="NP_001129042.1"/>
</dbReference>
<dbReference type="UCSC" id="uc009zuj.3">
    <property type="organism name" value="human"/>
</dbReference>
<dbReference type="AGR" id="HGNC:34450"/>
<dbReference type="CTD" id="728568"/>
<dbReference type="DisGeNET" id="728568"/>
<dbReference type="GeneCards" id="UQCC6"/>
<dbReference type="HGNC" id="HGNC:34450">
    <property type="gene designation" value="UQCC6"/>
</dbReference>
<dbReference type="HPA" id="ENSG00000204954">
    <property type="expression patterns" value="Tissue enhanced (skeletal)"/>
</dbReference>
<dbReference type="MIM" id="618812">
    <property type="type" value="gene"/>
</dbReference>
<dbReference type="neXtProt" id="NX_Q69YU5"/>
<dbReference type="OpenTargets" id="ENSG00000204954"/>
<dbReference type="PharmGKB" id="PA164716790"/>
<dbReference type="VEuPathDB" id="HostDB:ENSG00000204954"/>
<dbReference type="eggNOG" id="ENOG502S9EP">
    <property type="taxonomic scope" value="Eukaryota"/>
</dbReference>
<dbReference type="GeneTree" id="ENSGT00390000007685"/>
<dbReference type="HOGENOM" id="CLU_202878_0_0_1"/>
<dbReference type="InParanoid" id="Q69YU5"/>
<dbReference type="OMA" id="AVHRYYR"/>
<dbReference type="OrthoDB" id="6139781at2759"/>
<dbReference type="PAN-GO" id="Q69YU5">
    <property type="GO annotations" value="2 GO annotations based on evolutionary models"/>
</dbReference>
<dbReference type="PhylomeDB" id="Q69YU5"/>
<dbReference type="TreeFam" id="TF333420"/>
<dbReference type="PathwayCommons" id="Q69YU5"/>
<dbReference type="Reactome" id="R-HSA-9865881">
    <property type="pathway name" value="Complex III assembly"/>
</dbReference>
<dbReference type="SignaLink" id="Q69YU5"/>
<dbReference type="BioGRID-ORCS" id="728568">
    <property type="hits" value="8 hits in 1145 CRISPR screens"/>
</dbReference>
<dbReference type="ChiTaRS" id="C12orf73">
    <property type="organism name" value="human"/>
</dbReference>
<dbReference type="GenomeRNAi" id="728568"/>
<dbReference type="Pharos" id="Q69YU5">
    <property type="development level" value="Tdark"/>
</dbReference>
<dbReference type="PRO" id="PR:Q69YU5"/>
<dbReference type="Proteomes" id="UP000005640">
    <property type="component" value="Chromosome 12"/>
</dbReference>
<dbReference type="RNAct" id="Q69YU5">
    <property type="molecule type" value="protein"/>
</dbReference>
<dbReference type="Bgee" id="ENSG00000204954">
    <property type="expression patterns" value="Expressed in vastus lateralis and 181 other cell types or tissues"/>
</dbReference>
<dbReference type="ExpressionAtlas" id="Q69YU5">
    <property type="expression patterns" value="baseline and differential"/>
</dbReference>
<dbReference type="GO" id="GO:0005743">
    <property type="term" value="C:mitochondrial inner membrane"/>
    <property type="evidence" value="ECO:0000314"/>
    <property type="project" value="UniProtKB"/>
</dbReference>
<dbReference type="GO" id="GO:0005739">
    <property type="term" value="C:mitochondrion"/>
    <property type="evidence" value="ECO:0006056"/>
    <property type="project" value="FlyBase"/>
</dbReference>
<dbReference type="GO" id="GO:0033617">
    <property type="term" value="P:mitochondrial cytochrome c oxidase assembly"/>
    <property type="evidence" value="ECO:0000314"/>
    <property type="project" value="UniProtKB"/>
</dbReference>
<dbReference type="GO" id="GO:0034551">
    <property type="term" value="P:mitochondrial respiratory chain complex III assembly"/>
    <property type="evidence" value="ECO:0000315"/>
    <property type="project" value="UniProtKB"/>
</dbReference>
<dbReference type="InterPro" id="IPR027858">
    <property type="entry name" value="BRAWNIN"/>
</dbReference>
<dbReference type="PANTHER" id="PTHR28492">
    <property type="entry name" value="HYPOTHETICAL PROTEIN LOC691921"/>
    <property type="match status" value="1"/>
</dbReference>
<dbReference type="PANTHER" id="PTHR28492:SF1">
    <property type="entry name" value="UBIQUINOL-CYTOCHROME-C REDUCTASE COMPLEX ASSEMBLY FACTOR 6"/>
    <property type="match status" value="1"/>
</dbReference>
<dbReference type="Pfam" id="PF14990">
    <property type="entry name" value="DUF4516"/>
    <property type="match status" value="1"/>
</dbReference>
<feature type="chain" id="PRO_0000340273" description="Ubiquinol-cytochrome c reductase complex assembly factor 6">
    <location>
        <begin position="1"/>
        <end position="71"/>
    </location>
</feature>
<feature type="topological domain" description="Mitochondrial matrix" evidence="9">
    <location>
        <begin position="1"/>
        <end position="8"/>
    </location>
</feature>
<feature type="transmembrane region" description="Helical; Signal-anchor for type II membrane protein" evidence="2">
    <location>
        <begin position="9"/>
        <end position="25"/>
    </location>
</feature>
<feature type="topological domain" description="Mitochondrial intermembrane" evidence="8 9">
    <location>
        <begin position="26"/>
        <end position="71"/>
    </location>
</feature>
<feature type="sequence variant" id="VAR_062284" description="In dbSNP:rs2293624." evidence="3">
    <original>R</original>
    <variation>C</variation>
    <location>
        <position position="45"/>
    </location>
</feature>
<reference key="1">
    <citation type="journal article" date="2004" name="Nat. Genet.">
        <title>Complete sequencing and characterization of 21,243 full-length human cDNAs.</title>
        <authorList>
            <person name="Ota T."/>
            <person name="Suzuki Y."/>
            <person name="Nishikawa T."/>
            <person name="Otsuki T."/>
            <person name="Sugiyama T."/>
            <person name="Irie R."/>
            <person name="Wakamatsu A."/>
            <person name="Hayashi K."/>
            <person name="Sato H."/>
            <person name="Nagai K."/>
            <person name="Kimura K."/>
            <person name="Makita H."/>
            <person name="Sekine M."/>
            <person name="Obayashi M."/>
            <person name="Nishi T."/>
            <person name="Shibahara T."/>
            <person name="Tanaka T."/>
            <person name="Ishii S."/>
            <person name="Yamamoto J."/>
            <person name="Saito K."/>
            <person name="Kawai Y."/>
            <person name="Isono Y."/>
            <person name="Nakamura Y."/>
            <person name="Nagahari K."/>
            <person name="Murakami K."/>
            <person name="Yasuda T."/>
            <person name="Iwayanagi T."/>
            <person name="Wagatsuma M."/>
            <person name="Shiratori A."/>
            <person name="Sudo H."/>
            <person name="Hosoiri T."/>
            <person name="Kaku Y."/>
            <person name="Kodaira H."/>
            <person name="Kondo H."/>
            <person name="Sugawara M."/>
            <person name="Takahashi M."/>
            <person name="Kanda K."/>
            <person name="Yokoi T."/>
            <person name="Furuya T."/>
            <person name="Kikkawa E."/>
            <person name="Omura Y."/>
            <person name="Abe K."/>
            <person name="Kamihara K."/>
            <person name="Katsuta N."/>
            <person name="Sato K."/>
            <person name="Tanikawa M."/>
            <person name="Yamazaki M."/>
            <person name="Ninomiya K."/>
            <person name="Ishibashi T."/>
            <person name="Yamashita H."/>
            <person name="Murakawa K."/>
            <person name="Fujimori K."/>
            <person name="Tanai H."/>
            <person name="Kimata M."/>
            <person name="Watanabe M."/>
            <person name="Hiraoka S."/>
            <person name="Chiba Y."/>
            <person name="Ishida S."/>
            <person name="Ono Y."/>
            <person name="Takiguchi S."/>
            <person name="Watanabe S."/>
            <person name="Yosida M."/>
            <person name="Hotuta T."/>
            <person name="Kusano J."/>
            <person name="Kanehori K."/>
            <person name="Takahashi-Fujii A."/>
            <person name="Hara H."/>
            <person name="Tanase T.-O."/>
            <person name="Nomura Y."/>
            <person name="Togiya S."/>
            <person name="Komai F."/>
            <person name="Hara R."/>
            <person name="Takeuchi K."/>
            <person name="Arita M."/>
            <person name="Imose N."/>
            <person name="Musashino K."/>
            <person name="Yuuki H."/>
            <person name="Oshima A."/>
            <person name="Sasaki N."/>
            <person name="Aotsuka S."/>
            <person name="Yoshikawa Y."/>
            <person name="Matsunawa H."/>
            <person name="Ichihara T."/>
            <person name="Shiohata N."/>
            <person name="Sano S."/>
            <person name="Moriya S."/>
            <person name="Momiyama H."/>
            <person name="Satoh N."/>
            <person name="Takami S."/>
            <person name="Terashima Y."/>
            <person name="Suzuki O."/>
            <person name="Nakagawa S."/>
            <person name="Senoh A."/>
            <person name="Mizoguchi H."/>
            <person name="Goto Y."/>
            <person name="Shimizu F."/>
            <person name="Wakebe H."/>
            <person name="Hishigaki H."/>
            <person name="Watanabe T."/>
            <person name="Sugiyama A."/>
            <person name="Takemoto M."/>
            <person name="Kawakami B."/>
            <person name="Yamazaki M."/>
            <person name="Watanabe K."/>
            <person name="Kumagai A."/>
            <person name="Itakura S."/>
            <person name="Fukuzumi Y."/>
            <person name="Fujimori Y."/>
            <person name="Komiyama M."/>
            <person name="Tashiro H."/>
            <person name="Tanigami A."/>
            <person name="Fujiwara T."/>
            <person name="Ono T."/>
            <person name="Yamada K."/>
            <person name="Fujii Y."/>
            <person name="Ozaki K."/>
            <person name="Hirao M."/>
            <person name="Ohmori Y."/>
            <person name="Kawabata A."/>
            <person name="Hikiji T."/>
            <person name="Kobatake N."/>
            <person name="Inagaki H."/>
            <person name="Ikema Y."/>
            <person name="Okamoto S."/>
            <person name="Okitani R."/>
            <person name="Kawakami T."/>
            <person name="Noguchi S."/>
            <person name="Itoh T."/>
            <person name="Shigeta K."/>
            <person name="Senba T."/>
            <person name="Matsumura K."/>
            <person name="Nakajima Y."/>
            <person name="Mizuno T."/>
            <person name="Morinaga M."/>
            <person name="Sasaki M."/>
            <person name="Togashi T."/>
            <person name="Oyama M."/>
            <person name="Hata H."/>
            <person name="Watanabe M."/>
            <person name="Komatsu T."/>
            <person name="Mizushima-Sugano J."/>
            <person name="Satoh T."/>
            <person name="Shirai Y."/>
            <person name="Takahashi Y."/>
            <person name="Nakagawa K."/>
            <person name="Okumura K."/>
            <person name="Nagase T."/>
            <person name="Nomura N."/>
            <person name="Kikuchi H."/>
            <person name="Masuho Y."/>
            <person name="Yamashita R."/>
            <person name="Nakai K."/>
            <person name="Yada T."/>
            <person name="Nakamura Y."/>
            <person name="Ohara O."/>
            <person name="Isogai T."/>
            <person name="Sugano S."/>
        </authorList>
    </citation>
    <scope>NUCLEOTIDE SEQUENCE [LARGE SCALE MRNA]</scope>
    <source>
        <tissue>Retinoblastoma</tissue>
    </source>
</reference>
<reference key="2">
    <citation type="journal article" date="2007" name="BMC Genomics">
        <title>The full-ORF clone resource of the German cDNA consortium.</title>
        <authorList>
            <person name="Bechtel S."/>
            <person name="Rosenfelder H."/>
            <person name="Duda A."/>
            <person name="Schmidt C.P."/>
            <person name="Ernst U."/>
            <person name="Wellenreuther R."/>
            <person name="Mehrle A."/>
            <person name="Schuster C."/>
            <person name="Bahr A."/>
            <person name="Bloecker H."/>
            <person name="Heubner D."/>
            <person name="Hoerlein A."/>
            <person name="Michel G."/>
            <person name="Wedler H."/>
            <person name="Koehrer K."/>
            <person name="Ottenwaelder B."/>
            <person name="Poustka A."/>
            <person name="Wiemann S."/>
            <person name="Schupp I."/>
        </authorList>
    </citation>
    <scope>NUCLEOTIDE SEQUENCE [LARGE SCALE MRNA]</scope>
    <scope>VARIANT CYS-45</scope>
    <source>
        <tissue>Brain</tissue>
    </source>
</reference>
<reference key="3">
    <citation type="submission" date="2005-07" db="EMBL/GenBank/DDBJ databases">
        <authorList>
            <person name="Mural R.J."/>
            <person name="Istrail S."/>
            <person name="Sutton G.G."/>
            <person name="Florea L."/>
            <person name="Halpern A.L."/>
            <person name="Mobarry C.M."/>
            <person name="Lippert R."/>
            <person name="Walenz B."/>
            <person name="Shatkay H."/>
            <person name="Dew I."/>
            <person name="Miller J.R."/>
            <person name="Flanigan M.J."/>
            <person name="Edwards N.J."/>
            <person name="Bolanos R."/>
            <person name="Fasulo D."/>
            <person name="Halldorsson B.V."/>
            <person name="Hannenhalli S."/>
            <person name="Turner R."/>
            <person name="Yooseph S."/>
            <person name="Lu F."/>
            <person name="Nusskern D.R."/>
            <person name="Shue B.C."/>
            <person name="Zheng X.H."/>
            <person name="Zhong F."/>
            <person name="Delcher A.L."/>
            <person name="Huson D.H."/>
            <person name="Kravitz S.A."/>
            <person name="Mouchard L."/>
            <person name="Reinert K."/>
            <person name="Remington K.A."/>
            <person name="Clark A.G."/>
            <person name="Waterman M.S."/>
            <person name="Eichler E.E."/>
            <person name="Adams M.D."/>
            <person name="Hunkapiller M.W."/>
            <person name="Myers E.W."/>
            <person name="Venter J.C."/>
        </authorList>
    </citation>
    <scope>NUCLEOTIDE SEQUENCE [LARGE SCALE GENOMIC DNA]</scope>
</reference>
<reference key="4">
    <citation type="journal article" date="2004" name="Genome Res.">
        <title>The status, quality, and expansion of the NIH full-length cDNA project: the Mammalian Gene Collection (MGC).</title>
        <authorList>
            <consortium name="The MGC Project Team"/>
        </authorList>
    </citation>
    <scope>NUCLEOTIDE SEQUENCE [LARGE SCALE MRNA]</scope>
    <source>
        <tissue>Lung carcinoma</tissue>
    </source>
</reference>
<reference key="5">
    <citation type="journal article" date="2020" name="Nat. Commun.">
        <title>Mitochondrial peptide BRAWNIN is essential for vertebrate respiratory complex III assembly.</title>
        <authorList>
            <person name="Zhang S."/>
            <person name="Reljic B."/>
            <person name="Liang C."/>
            <person name="Kerouanton B."/>
            <person name="Francisco J.C."/>
            <person name="Peh J.H."/>
            <person name="Mary C."/>
            <person name="Jagannathan N.S."/>
            <person name="Olexiouk V."/>
            <person name="Tang C."/>
            <person name="Fidelito G."/>
            <person name="Nama S."/>
            <person name="Cheng R.K."/>
            <person name="Wee C.L."/>
            <person name="Wang L.C."/>
            <person name="Duek Roggli P."/>
            <person name="Sampath P."/>
            <person name="Lane L."/>
            <person name="Petretto E."/>
            <person name="Sobota R.M."/>
            <person name="Jesuthasan S."/>
            <person name="Tucker-Kellogg L."/>
            <person name="Reversade B."/>
            <person name="Menschaert G."/>
            <person name="Sun L."/>
            <person name="Stroud D.A."/>
            <person name="Ho L."/>
        </authorList>
    </citation>
    <scope>FUNCTION</scope>
    <scope>SUBCELLULAR LOCATION</scope>
    <scope>TOPOLOGY</scope>
    <scope>TISSUE SPECIFICITY</scope>
    <scope>INDUCTION</scope>
    <scope>INTERACTION WITH UQCRC1</scope>
</reference>
<reference key="6">
    <citation type="journal article" date="2021" name="Elife">
        <title>Defining the interactome of the human mitochondrial ribosome identifies SMIM4 and TMEM223 as respiratory chain assembly factors.</title>
        <authorList>
            <person name="Dennerlein S."/>
            <person name="Poerschke S."/>
            <person name="Oeljeklaus S."/>
            <person name="Wang C."/>
            <person name="Richter-Dennerlein R."/>
            <person name="Sattmann J."/>
            <person name="Bauermeister D."/>
            <person name="Hanitsch E."/>
            <person name="Stoldt S."/>
            <person name="Langer T."/>
            <person name="Jakobs S."/>
            <person name="Warscheid B."/>
            <person name="Rehling P."/>
        </authorList>
    </citation>
    <scope>FUNCTION</scope>
    <scope>SUBCELLULAR LOCATION</scope>
    <scope>TOPOLOGY</scope>
    <scope>INTERACTION WITH UQCC5</scope>
</reference>